<protein>
    <recommendedName>
        <fullName>Pyruvate formate-lyase 1-activating enzyme</fullName>
        <ecNumber>1.97.1.4</ecNumber>
    </recommendedName>
    <alternativeName>
        <fullName>Formate-C-acetyltransferase-activating enzyme 1</fullName>
    </alternativeName>
    <alternativeName>
        <fullName>PFL-activating enzyme 1</fullName>
    </alternativeName>
</protein>
<gene>
    <name type="primary">pflA</name>
    <name type="ordered locus">Z1246</name>
    <name type="ordered locus">ECs0985</name>
</gene>
<sequence>MSVIGRIHSFESCGTVDGPGIRFITFFQGCLMRCLYCHNRDTWDTHGGKEVTVEDLMKEVVTYRHFMNASGGGVTASGGEAILQAEFVRDWFRACKKEGIHTCLDTNGFVRRYDPVIDELLEVTDLVMLDLKQMNDEIHQNLVGVSNHRTLEFAKYLANKNVKVWIRYVVVPGWSDDDDSAHRLGEFTRDMGNVEKIELLPYHELGKHKWVAMGEEYKLDGVKPPKKETMERVKGILEQYGHKVMF</sequence>
<dbReference type="EC" id="1.97.1.4"/>
<dbReference type="EMBL" id="AE005174">
    <property type="protein sequence ID" value="AAG55387.1"/>
    <property type="molecule type" value="Genomic_DNA"/>
</dbReference>
<dbReference type="EMBL" id="BA000007">
    <property type="protein sequence ID" value="BAB34408.1"/>
    <property type="molecule type" value="Genomic_DNA"/>
</dbReference>
<dbReference type="PIR" id="A99752">
    <property type="entry name" value="A99752"/>
</dbReference>
<dbReference type="PIR" id="G85615">
    <property type="entry name" value="G85615"/>
</dbReference>
<dbReference type="RefSeq" id="NP_309012.1">
    <property type="nucleotide sequence ID" value="NC_002695.1"/>
</dbReference>
<dbReference type="RefSeq" id="WP_000111043.1">
    <property type="nucleotide sequence ID" value="NZ_VOAI01000006.1"/>
</dbReference>
<dbReference type="SMR" id="P0A9N6"/>
<dbReference type="STRING" id="155864.Z1246"/>
<dbReference type="GeneID" id="917728"/>
<dbReference type="GeneID" id="93776516"/>
<dbReference type="KEGG" id="ece:Z1246"/>
<dbReference type="KEGG" id="ecs:ECs_0985"/>
<dbReference type="PATRIC" id="fig|386585.9.peg.1104"/>
<dbReference type="eggNOG" id="COG1180">
    <property type="taxonomic scope" value="Bacteria"/>
</dbReference>
<dbReference type="HOGENOM" id="CLU_058969_1_0_6"/>
<dbReference type="OMA" id="IGVPNKR"/>
<dbReference type="Proteomes" id="UP000000558">
    <property type="component" value="Chromosome"/>
</dbReference>
<dbReference type="Proteomes" id="UP000002519">
    <property type="component" value="Chromosome"/>
</dbReference>
<dbReference type="GO" id="GO:0005737">
    <property type="term" value="C:cytoplasm"/>
    <property type="evidence" value="ECO:0007669"/>
    <property type="project" value="UniProtKB-SubCell"/>
</dbReference>
<dbReference type="GO" id="GO:0051539">
    <property type="term" value="F:4 iron, 4 sulfur cluster binding"/>
    <property type="evidence" value="ECO:0007669"/>
    <property type="project" value="UniProtKB-KW"/>
</dbReference>
<dbReference type="GO" id="GO:0043365">
    <property type="term" value="F:[formate-C-acetyltransferase]-activating enzyme activity"/>
    <property type="evidence" value="ECO:0007669"/>
    <property type="project" value="UniProtKB-EC"/>
</dbReference>
<dbReference type="GO" id="GO:0046872">
    <property type="term" value="F:metal ion binding"/>
    <property type="evidence" value="ECO:0007669"/>
    <property type="project" value="UniProtKB-KW"/>
</dbReference>
<dbReference type="GO" id="GO:0006006">
    <property type="term" value="P:glucose metabolic process"/>
    <property type="evidence" value="ECO:0007669"/>
    <property type="project" value="UniProtKB-KW"/>
</dbReference>
<dbReference type="CDD" id="cd01335">
    <property type="entry name" value="Radical_SAM"/>
    <property type="match status" value="1"/>
</dbReference>
<dbReference type="FunFam" id="3.20.20.70:FF:000050">
    <property type="entry name" value="Pyruvate formate-lyase-activating enzyme"/>
    <property type="match status" value="1"/>
</dbReference>
<dbReference type="Gene3D" id="3.20.20.70">
    <property type="entry name" value="Aldolase class I"/>
    <property type="match status" value="1"/>
</dbReference>
<dbReference type="InterPro" id="IPR013785">
    <property type="entry name" value="Aldolase_TIM"/>
</dbReference>
<dbReference type="InterPro" id="IPR034457">
    <property type="entry name" value="Organic_radical-activating"/>
</dbReference>
<dbReference type="InterPro" id="IPR012839">
    <property type="entry name" value="Organic_radical_activase"/>
</dbReference>
<dbReference type="InterPro" id="IPR012838">
    <property type="entry name" value="PFL1_activating"/>
</dbReference>
<dbReference type="InterPro" id="IPR034465">
    <property type="entry name" value="Pyruvate_for-lyase_activase"/>
</dbReference>
<dbReference type="InterPro" id="IPR001989">
    <property type="entry name" value="Radical_activat_CS"/>
</dbReference>
<dbReference type="InterPro" id="IPR007197">
    <property type="entry name" value="rSAM"/>
</dbReference>
<dbReference type="NCBIfam" id="TIGR02493">
    <property type="entry name" value="PFLA"/>
    <property type="match status" value="1"/>
</dbReference>
<dbReference type="NCBIfam" id="NF008356">
    <property type="entry name" value="PRK11145.1"/>
    <property type="match status" value="1"/>
</dbReference>
<dbReference type="PANTHER" id="PTHR30352:SF5">
    <property type="entry name" value="PYRUVATE FORMATE-LYASE 1-ACTIVATING ENZYME"/>
    <property type="match status" value="1"/>
</dbReference>
<dbReference type="PANTHER" id="PTHR30352">
    <property type="entry name" value="PYRUVATE FORMATE-LYASE-ACTIVATING ENZYME"/>
    <property type="match status" value="1"/>
</dbReference>
<dbReference type="Pfam" id="PF13353">
    <property type="entry name" value="Fer4_12"/>
    <property type="match status" value="1"/>
</dbReference>
<dbReference type="Pfam" id="PF04055">
    <property type="entry name" value="Radical_SAM"/>
    <property type="match status" value="1"/>
</dbReference>
<dbReference type="PIRSF" id="PIRSF000371">
    <property type="entry name" value="PFL_act_enz"/>
    <property type="match status" value="1"/>
</dbReference>
<dbReference type="SFLD" id="SFLDG01066">
    <property type="entry name" value="organic_radical-activating_enz"/>
    <property type="match status" value="1"/>
</dbReference>
<dbReference type="SFLD" id="SFLDF00278">
    <property type="entry name" value="pyruvate_formate-lyase_activas"/>
    <property type="match status" value="1"/>
</dbReference>
<dbReference type="SUPFAM" id="SSF102114">
    <property type="entry name" value="Radical SAM enzymes"/>
    <property type="match status" value="1"/>
</dbReference>
<dbReference type="PROSITE" id="PS01087">
    <property type="entry name" value="RADICAL_ACTIVATING"/>
    <property type="match status" value="1"/>
</dbReference>
<dbReference type="PROSITE" id="PS51918">
    <property type="entry name" value="RADICAL_SAM"/>
    <property type="match status" value="1"/>
</dbReference>
<keyword id="KW-0004">4Fe-4S</keyword>
<keyword id="KW-0119">Carbohydrate metabolism</keyword>
<keyword id="KW-0963">Cytoplasm</keyword>
<keyword id="KW-0313">Glucose metabolism</keyword>
<keyword id="KW-0408">Iron</keyword>
<keyword id="KW-0411">Iron-sulfur</keyword>
<keyword id="KW-0479">Metal-binding</keyword>
<keyword id="KW-0560">Oxidoreductase</keyword>
<keyword id="KW-1185">Reference proteome</keyword>
<keyword id="KW-0949">S-adenosyl-L-methionine</keyword>
<comment type="function">
    <text evidence="1">Activation of pyruvate formate-lyase 1 under anaerobic conditions by generation of an organic free radical, using S-adenosylmethionine and reduced flavodoxin as cosubstrates to produce 5'-deoxy-adenosine.</text>
</comment>
<comment type="catalytic activity">
    <reaction>
        <text>glycyl-[formate C-acetyltransferase] + reduced [flavodoxin] + S-adenosyl-L-methionine = glycin-2-yl radical-[formate C-acetyltransferase] + semiquinone [flavodoxin] + 5'-deoxyadenosine + L-methionine + H(+)</text>
        <dbReference type="Rhea" id="RHEA:19225"/>
        <dbReference type="Rhea" id="RHEA-COMP:10622"/>
        <dbReference type="Rhea" id="RHEA-COMP:12190"/>
        <dbReference type="Rhea" id="RHEA-COMP:12191"/>
        <dbReference type="Rhea" id="RHEA-COMP:14480"/>
        <dbReference type="ChEBI" id="CHEBI:15378"/>
        <dbReference type="ChEBI" id="CHEBI:17319"/>
        <dbReference type="ChEBI" id="CHEBI:29947"/>
        <dbReference type="ChEBI" id="CHEBI:32722"/>
        <dbReference type="ChEBI" id="CHEBI:57618"/>
        <dbReference type="ChEBI" id="CHEBI:57844"/>
        <dbReference type="ChEBI" id="CHEBI:59789"/>
        <dbReference type="ChEBI" id="CHEBI:140311"/>
        <dbReference type="EC" id="1.97.1.4"/>
    </reaction>
</comment>
<comment type="cofactor">
    <cofactor evidence="1">
        <name>[4Fe-4S] cluster</name>
        <dbReference type="ChEBI" id="CHEBI:49883"/>
    </cofactor>
    <text evidence="1">Binds 1 [4Fe-4S] cluster. The cluster is coordinated with 3 cysteines and an exchangeable S-adenosyl-L-methionine.</text>
</comment>
<comment type="subcellular location">
    <subcellularLocation>
        <location evidence="1">Cytoplasm</location>
    </subcellularLocation>
</comment>
<comment type="similarity">
    <text evidence="4">Belongs to the organic radical-activating enzymes family.</text>
</comment>
<reference key="1">
    <citation type="journal article" date="2001" name="Nature">
        <title>Genome sequence of enterohaemorrhagic Escherichia coli O157:H7.</title>
        <authorList>
            <person name="Perna N.T."/>
            <person name="Plunkett G. III"/>
            <person name="Burland V."/>
            <person name="Mau B."/>
            <person name="Glasner J.D."/>
            <person name="Rose D.J."/>
            <person name="Mayhew G.F."/>
            <person name="Evans P.S."/>
            <person name="Gregor J."/>
            <person name="Kirkpatrick H.A."/>
            <person name="Posfai G."/>
            <person name="Hackett J."/>
            <person name="Klink S."/>
            <person name="Boutin A."/>
            <person name="Shao Y."/>
            <person name="Miller L."/>
            <person name="Grotbeck E.J."/>
            <person name="Davis N.W."/>
            <person name="Lim A."/>
            <person name="Dimalanta E.T."/>
            <person name="Potamousis K."/>
            <person name="Apodaca J."/>
            <person name="Anantharaman T.S."/>
            <person name="Lin J."/>
            <person name="Yen G."/>
            <person name="Schwartz D.C."/>
            <person name="Welch R.A."/>
            <person name="Blattner F.R."/>
        </authorList>
    </citation>
    <scope>NUCLEOTIDE SEQUENCE [LARGE SCALE GENOMIC DNA]</scope>
    <source>
        <strain>O157:H7 / EDL933 / ATCC 700927 / EHEC</strain>
    </source>
</reference>
<reference key="2">
    <citation type="journal article" date="2001" name="DNA Res.">
        <title>Complete genome sequence of enterohemorrhagic Escherichia coli O157:H7 and genomic comparison with a laboratory strain K-12.</title>
        <authorList>
            <person name="Hayashi T."/>
            <person name="Makino K."/>
            <person name="Ohnishi M."/>
            <person name="Kurokawa K."/>
            <person name="Ishii K."/>
            <person name="Yokoyama K."/>
            <person name="Han C.-G."/>
            <person name="Ohtsubo E."/>
            <person name="Nakayama K."/>
            <person name="Murata T."/>
            <person name="Tanaka M."/>
            <person name="Tobe T."/>
            <person name="Iida T."/>
            <person name="Takami H."/>
            <person name="Honda T."/>
            <person name="Sasakawa C."/>
            <person name="Ogasawara N."/>
            <person name="Yasunaga T."/>
            <person name="Kuhara S."/>
            <person name="Shiba T."/>
            <person name="Hattori M."/>
            <person name="Shinagawa H."/>
        </authorList>
    </citation>
    <scope>NUCLEOTIDE SEQUENCE [LARGE SCALE GENOMIC DNA]</scope>
    <source>
        <strain>O157:H7 / Sakai / RIMD 0509952 / EHEC</strain>
    </source>
</reference>
<accession>P0A9N6</accession>
<accession>P09374</accession>
<organism>
    <name type="scientific">Escherichia coli O157:H7</name>
    <dbReference type="NCBI Taxonomy" id="83334"/>
    <lineage>
        <taxon>Bacteria</taxon>
        <taxon>Pseudomonadati</taxon>
        <taxon>Pseudomonadota</taxon>
        <taxon>Gammaproteobacteria</taxon>
        <taxon>Enterobacterales</taxon>
        <taxon>Enterobacteriaceae</taxon>
        <taxon>Escherichia</taxon>
    </lineage>
</organism>
<name>PFLA_ECO57</name>
<feature type="initiator methionine" description="Removed" evidence="1">
    <location>
        <position position="1"/>
    </location>
</feature>
<feature type="chain" id="PRO_0000200523" description="Pyruvate formate-lyase 1-activating enzyme">
    <location>
        <begin position="2"/>
        <end position="246"/>
    </location>
</feature>
<feature type="domain" description="Radical SAM core" evidence="3">
    <location>
        <begin position="16"/>
        <end position="239"/>
    </location>
</feature>
<feature type="binding site" evidence="2">
    <location>
        <position position="30"/>
    </location>
    <ligand>
        <name>[4Fe-4S] cluster</name>
        <dbReference type="ChEBI" id="CHEBI:49883"/>
        <note>4Fe-4S-S-AdoMet</note>
    </ligand>
</feature>
<feature type="binding site" evidence="2">
    <location>
        <position position="34"/>
    </location>
    <ligand>
        <name>[4Fe-4S] cluster</name>
        <dbReference type="ChEBI" id="CHEBI:49883"/>
        <note>4Fe-4S-S-AdoMet</note>
    </ligand>
</feature>
<feature type="binding site" evidence="2">
    <location>
        <begin position="36"/>
        <end position="38"/>
    </location>
    <ligand>
        <name>S-adenosyl-L-methionine</name>
        <dbReference type="ChEBI" id="CHEBI:59789"/>
    </ligand>
</feature>
<feature type="binding site" evidence="2">
    <location>
        <position position="37"/>
    </location>
    <ligand>
        <name>[4Fe-4S] cluster</name>
        <dbReference type="ChEBI" id="CHEBI:49883"/>
        <note>4Fe-4S-S-AdoMet</note>
    </ligand>
</feature>
<feature type="binding site" evidence="2">
    <location>
        <position position="79"/>
    </location>
    <ligand>
        <name>S-adenosyl-L-methionine</name>
        <dbReference type="ChEBI" id="CHEBI:59789"/>
    </ligand>
</feature>
<feature type="binding site" evidence="2">
    <location>
        <begin position="130"/>
        <end position="132"/>
    </location>
    <ligand>
        <name>S-adenosyl-L-methionine</name>
        <dbReference type="ChEBI" id="CHEBI:59789"/>
    </ligand>
</feature>
<feature type="binding site" evidence="2">
    <location>
        <position position="203"/>
    </location>
    <ligand>
        <name>S-adenosyl-L-methionine</name>
        <dbReference type="ChEBI" id="CHEBI:59789"/>
    </ligand>
</feature>
<evidence type="ECO:0000250" key="1"/>
<evidence type="ECO:0000250" key="2">
    <source>
        <dbReference type="UniProtKB" id="P0A9N4"/>
    </source>
</evidence>
<evidence type="ECO:0000255" key="3">
    <source>
        <dbReference type="PROSITE-ProRule" id="PRU01266"/>
    </source>
</evidence>
<evidence type="ECO:0000305" key="4"/>
<proteinExistence type="inferred from homology"/>